<reference key="1">
    <citation type="journal article" date="2009" name="PLoS ONE">
        <title>Genome analysis of the anaerobic thermohalophilic bacterium Halothermothrix orenii.</title>
        <authorList>
            <person name="Mavromatis K."/>
            <person name="Ivanova N."/>
            <person name="Anderson I."/>
            <person name="Lykidis A."/>
            <person name="Hooper S.D."/>
            <person name="Sun H."/>
            <person name="Kunin V."/>
            <person name="Lapidus A."/>
            <person name="Hugenholtz P."/>
            <person name="Patel B."/>
            <person name="Kyrpides N.C."/>
        </authorList>
    </citation>
    <scope>NUCLEOTIDE SEQUENCE [LARGE SCALE GENOMIC DNA]</scope>
    <source>
        <strain>H 168 / OCM 544 / DSM 9562</strain>
    </source>
</reference>
<feature type="chain" id="PRO_0000383251" description="Nucleotide-binding protein Hore_15880">
    <location>
        <begin position="1"/>
        <end position="283"/>
    </location>
</feature>
<feature type="binding site" evidence="1">
    <location>
        <begin position="8"/>
        <end position="15"/>
    </location>
    <ligand>
        <name>ATP</name>
        <dbReference type="ChEBI" id="CHEBI:30616"/>
    </ligand>
</feature>
<feature type="binding site" evidence="1">
    <location>
        <begin position="57"/>
        <end position="60"/>
    </location>
    <ligand>
        <name>GTP</name>
        <dbReference type="ChEBI" id="CHEBI:37565"/>
    </ligand>
</feature>
<sequence>MQFLIVTGMSGAGKSVALNFFEDMGFFCIDNLPPALISKFAELCLHSELDKIAVVSDIRGREFFNALFSELSSLEKRGIDYEILFLEASDEVLIRRYKETRRRHPLDEEGRVLDAIRKERHLLEEIKGKANKIIDTSKLSKQELNHELKKVYSSYFIGKQSMSVTIISFGYKYGIPMDADLVFDVRFLPNPYYVRSLKERTGEETVVQDYILKWPVTQKFYKRFFDMMDFLLPEYSREGKSHFTIAIGCTGGKHRSVTTAIKLKEFLLSKGYHVVVEHKDISK</sequence>
<comment type="function">
    <text evidence="1">Displays ATPase and GTPase activities.</text>
</comment>
<comment type="similarity">
    <text evidence="1">Belongs to the RapZ-like family.</text>
</comment>
<organism>
    <name type="scientific">Halothermothrix orenii (strain H 168 / OCM 544 / DSM 9562)</name>
    <dbReference type="NCBI Taxonomy" id="373903"/>
    <lineage>
        <taxon>Bacteria</taxon>
        <taxon>Bacillati</taxon>
        <taxon>Bacillota</taxon>
        <taxon>Clostridia</taxon>
        <taxon>Halanaerobiales</taxon>
        <taxon>Halothermotrichaceae</taxon>
        <taxon>Halothermothrix</taxon>
    </lineage>
</organism>
<name>Y1588_HALOH</name>
<protein>
    <recommendedName>
        <fullName evidence="1">Nucleotide-binding protein Hore_15880</fullName>
    </recommendedName>
</protein>
<gene>
    <name type="ordered locus">Hore_15880</name>
</gene>
<keyword id="KW-0067">ATP-binding</keyword>
<keyword id="KW-0342">GTP-binding</keyword>
<keyword id="KW-0547">Nucleotide-binding</keyword>
<keyword id="KW-1185">Reference proteome</keyword>
<evidence type="ECO:0000255" key="1">
    <source>
        <dbReference type="HAMAP-Rule" id="MF_00636"/>
    </source>
</evidence>
<proteinExistence type="inferred from homology"/>
<dbReference type="EMBL" id="CP001098">
    <property type="protein sequence ID" value="ACL70337.1"/>
    <property type="molecule type" value="Genomic_DNA"/>
</dbReference>
<dbReference type="RefSeq" id="WP_012636520.1">
    <property type="nucleotide sequence ID" value="NC_011899.1"/>
</dbReference>
<dbReference type="SMR" id="B8CYG8"/>
<dbReference type="STRING" id="373903.Hore_15880"/>
<dbReference type="KEGG" id="hor:Hore_15880"/>
<dbReference type="eggNOG" id="COG1660">
    <property type="taxonomic scope" value="Bacteria"/>
</dbReference>
<dbReference type="HOGENOM" id="CLU_059558_0_0_9"/>
<dbReference type="OrthoDB" id="9784461at2"/>
<dbReference type="Proteomes" id="UP000000719">
    <property type="component" value="Chromosome"/>
</dbReference>
<dbReference type="GO" id="GO:0005524">
    <property type="term" value="F:ATP binding"/>
    <property type="evidence" value="ECO:0007669"/>
    <property type="project" value="UniProtKB-UniRule"/>
</dbReference>
<dbReference type="GO" id="GO:0005525">
    <property type="term" value="F:GTP binding"/>
    <property type="evidence" value="ECO:0007669"/>
    <property type="project" value="UniProtKB-UniRule"/>
</dbReference>
<dbReference type="Gene3D" id="3.40.50.300">
    <property type="entry name" value="P-loop containing nucleotide triphosphate hydrolases"/>
    <property type="match status" value="1"/>
</dbReference>
<dbReference type="HAMAP" id="MF_00636">
    <property type="entry name" value="RapZ_like"/>
    <property type="match status" value="1"/>
</dbReference>
<dbReference type="InterPro" id="IPR027417">
    <property type="entry name" value="P-loop_NTPase"/>
</dbReference>
<dbReference type="InterPro" id="IPR005337">
    <property type="entry name" value="RapZ-like"/>
</dbReference>
<dbReference type="InterPro" id="IPR053930">
    <property type="entry name" value="RapZ-like_N"/>
</dbReference>
<dbReference type="InterPro" id="IPR053931">
    <property type="entry name" value="RapZ_C"/>
</dbReference>
<dbReference type="NCBIfam" id="NF003828">
    <property type="entry name" value="PRK05416.1"/>
    <property type="match status" value="1"/>
</dbReference>
<dbReference type="PANTHER" id="PTHR30448">
    <property type="entry name" value="RNASE ADAPTER PROTEIN RAPZ"/>
    <property type="match status" value="1"/>
</dbReference>
<dbReference type="PANTHER" id="PTHR30448:SF0">
    <property type="entry name" value="RNASE ADAPTER PROTEIN RAPZ"/>
    <property type="match status" value="1"/>
</dbReference>
<dbReference type="Pfam" id="PF22740">
    <property type="entry name" value="PapZ_C"/>
    <property type="match status" value="1"/>
</dbReference>
<dbReference type="Pfam" id="PF03668">
    <property type="entry name" value="RapZ-like_N"/>
    <property type="match status" value="1"/>
</dbReference>
<dbReference type="PIRSF" id="PIRSF005052">
    <property type="entry name" value="P-loopkin"/>
    <property type="match status" value="1"/>
</dbReference>
<dbReference type="SUPFAM" id="SSF52540">
    <property type="entry name" value="P-loop containing nucleoside triphosphate hydrolases"/>
    <property type="match status" value="1"/>
</dbReference>
<accession>B8CYG8</accession>